<feature type="chain" id="PRO_1000009894" description="Uracil-DNA glycosylase">
    <location>
        <begin position="1"/>
        <end position="229"/>
    </location>
</feature>
<feature type="active site" description="Proton acceptor" evidence="1">
    <location>
        <position position="64"/>
    </location>
</feature>
<evidence type="ECO:0000255" key="1">
    <source>
        <dbReference type="HAMAP-Rule" id="MF_00148"/>
    </source>
</evidence>
<accession>A4ITQ2</accession>
<name>UNG_GEOTN</name>
<sequence>MPILKNDWAPLLEEEFQKPYYLKLREFLKEEYRTRTIYPDMYDIFNALHYTPYANVKVVLLGQDPYHGPGQAHGLSFSVKPGVPVPPSLVNIFKELHDDLGCYIPDNGYLVKWAKQGVLLLNTVLTVRRGQANSHRGKGWEHFTDRVIELVNEKDDPVVFLLWGRNAQEKKERITNPRHHIIEAPHPSPFSAARGFFGHRPFSRTNAFLTKCGREPIDWQIENIGARAE</sequence>
<reference key="1">
    <citation type="journal article" date="2007" name="Proc. Natl. Acad. Sci. U.S.A.">
        <title>Genome and proteome of long-chain alkane degrading Geobacillus thermodenitrificans NG80-2 isolated from a deep-subsurface oil reservoir.</title>
        <authorList>
            <person name="Feng L."/>
            <person name="Wang W."/>
            <person name="Cheng J."/>
            <person name="Ren Y."/>
            <person name="Zhao G."/>
            <person name="Gao C."/>
            <person name="Tang Y."/>
            <person name="Liu X."/>
            <person name="Han W."/>
            <person name="Peng X."/>
            <person name="Liu R."/>
            <person name="Wang L."/>
        </authorList>
    </citation>
    <scope>NUCLEOTIDE SEQUENCE [LARGE SCALE GENOMIC DNA]</scope>
    <source>
        <strain>NG80-2</strain>
    </source>
</reference>
<keyword id="KW-0963">Cytoplasm</keyword>
<keyword id="KW-0227">DNA damage</keyword>
<keyword id="KW-0234">DNA repair</keyword>
<keyword id="KW-0378">Hydrolase</keyword>
<dbReference type="EC" id="3.2.2.27" evidence="1"/>
<dbReference type="EMBL" id="CP000557">
    <property type="protein sequence ID" value="ABO68706.1"/>
    <property type="molecule type" value="Genomic_DNA"/>
</dbReference>
<dbReference type="RefSeq" id="WP_008880759.1">
    <property type="nucleotide sequence ID" value="NC_009328.1"/>
</dbReference>
<dbReference type="SMR" id="A4ITQ2"/>
<dbReference type="GeneID" id="87622521"/>
<dbReference type="KEGG" id="gtn:GTNG_3369"/>
<dbReference type="eggNOG" id="COG0692">
    <property type="taxonomic scope" value="Bacteria"/>
</dbReference>
<dbReference type="HOGENOM" id="CLU_032162_3_0_9"/>
<dbReference type="Proteomes" id="UP000001578">
    <property type="component" value="Chromosome"/>
</dbReference>
<dbReference type="GO" id="GO:0005737">
    <property type="term" value="C:cytoplasm"/>
    <property type="evidence" value="ECO:0007669"/>
    <property type="project" value="UniProtKB-SubCell"/>
</dbReference>
<dbReference type="GO" id="GO:0004844">
    <property type="term" value="F:uracil DNA N-glycosylase activity"/>
    <property type="evidence" value="ECO:0007669"/>
    <property type="project" value="UniProtKB-UniRule"/>
</dbReference>
<dbReference type="GO" id="GO:0097510">
    <property type="term" value="P:base-excision repair, AP site formation via deaminated base removal"/>
    <property type="evidence" value="ECO:0007669"/>
    <property type="project" value="TreeGrafter"/>
</dbReference>
<dbReference type="CDD" id="cd10027">
    <property type="entry name" value="UDG-F1-like"/>
    <property type="match status" value="1"/>
</dbReference>
<dbReference type="FunFam" id="3.40.470.10:FF:000001">
    <property type="entry name" value="Uracil-DNA glycosylase"/>
    <property type="match status" value="1"/>
</dbReference>
<dbReference type="Gene3D" id="3.40.470.10">
    <property type="entry name" value="Uracil-DNA glycosylase-like domain"/>
    <property type="match status" value="1"/>
</dbReference>
<dbReference type="HAMAP" id="MF_00148">
    <property type="entry name" value="UDG"/>
    <property type="match status" value="1"/>
</dbReference>
<dbReference type="InterPro" id="IPR002043">
    <property type="entry name" value="UDG_fam1"/>
</dbReference>
<dbReference type="InterPro" id="IPR018085">
    <property type="entry name" value="Ura-DNA_Glyclase_AS"/>
</dbReference>
<dbReference type="InterPro" id="IPR005122">
    <property type="entry name" value="Uracil-DNA_glycosylase-like"/>
</dbReference>
<dbReference type="InterPro" id="IPR036895">
    <property type="entry name" value="Uracil-DNA_glycosylase-like_sf"/>
</dbReference>
<dbReference type="NCBIfam" id="NF003588">
    <property type="entry name" value="PRK05254.1-1"/>
    <property type="match status" value="1"/>
</dbReference>
<dbReference type="NCBIfam" id="NF003589">
    <property type="entry name" value="PRK05254.1-2"/>
    <property type="match status" value="1"/>
</dbReference>
<dbReference type="NCBIfam" id="NF003591">
    <property type="entry name" value="PRK05254.1-4"/>
    <property type="match status" value="1"/>
</dbReference>
<dbReference type="NCBIfam" id="NF003592">
    <property type="entry name" value="PRK05254.1-5"/>
    <property type="match status" value="1"/>
</dbReference>
<dbReference type="NCBIfam" id="TIGR00628">
    <property type="entry name" value="ung"/>
    <property type="match status" value="1"/>
</dbReference>
<dbReference type="PANTHER" id="PTHR11264">
    <property type="entry name" value="URACIL-DNA GLYCOSYLASE"/>
    <property type="match status" value="1"/>
</dbReference>
<dbReference type="PANTHER" id="PTHR11264:SF0">
    <property type="entry name" value="URACIL-DNA GLYCOSYLASE"/>
    <property type="match status" value="1"/>
</dbReference>
<dbReference type="Pfam" id="PF03167">
    <property type="entry name" value="UDG"/>
    <property type="match status" value="1"/>
</dbReference>
<dbReference type="SMART" id="SM00986">
    <property type="entry name" value="UDG"/>
    <property type="match status" value="1"/>
</dbReference>
<dbReference type="SMART" id="SM00987">
    <property type="entry name" value="UreE_C"/>
    <property type="match status" value="1"/>
</dbReference>
<dbReference type="SUPFAM" id="SSF52141">
    <property type="entry name" value="Uracil-DNA glycosylase-like"/>
    <property type="match status" value="1"/>
</dbReference>
<dbReference type="PROSITE" id="PS00130">
    <property type="entry name" value="U_DNA_GLYCOSYLASE"/>
    <property type="match status" value="1"/>
</dbReference>
<proteinExistence type="inferred from homology"/>
<gene>
    <name evidence="1" type="primary">ung</name>
    <name type="ordered locus">GTNG_3369</name>
</gene>
<protein>
    <recommendedName>
        <fullName evidence="1">Uracil-DNA glycosylase</fullName>
        <shortName evidence="1">UDG</shortName>
        <ecNumber evidence="1">3.2.2.27</ecNumber>
    </recommendedName>
</protein>
<organism>
    <name type="scientific">Geobacillus thermodenitrificans (strain NG80-2)</name>
    <dbReference type="NCBI Taxonomy" id="420246"/>
    <lineage>
        <taxon>Bacteria</taxon>
        <taxon>Bacillati</taxon>
        <taxon>Bacillota</taxon>
        <taxon>Bacilli</taxon>
        <taxon>Bacillales</taxon>
        <taxon>Anoxybacillaceae</taxon>
        <taxon>Geobacillus</taxon>
    </lineage>
</organism>
<comment type="function">
    <text evidence="1">Excises uracil residues from the DNA which can arise as a result of misincorporation of dUMP residues by DNA polymerase or due to deamination of cytosine.</text>
</comment>
<comment type="catalytic activity">
    <reaction evidence="1">
        <text>Hydrolyzes single-stranded DNA or mismatched double-stranded DNA and polynucleotides, releasing free uracil.</text>
        <dbReference type="EC" id="3.2.2.27"/>
    </reaction>
</comment>
<comment type="subcellular location">
    <subcellularLocation>
        <location evidence="1">Cytoplasm</location>
    </subcellularLocation>
</comment>
<comment type="similarity">
    <text evidence="1">Belongs to the uracil-DNA glycosylase (UDG) superfamily. UNG family.</text>
</comment>